<proteinExistence type="evidence at protein level"/>
<name>DAPA_AQUAE</name>
<reference key="1">
    <citation type="journal article" date="1998" name="Nature">
        <title>The complete genome of the hyperthermophilic bacterium Aquifex aeolicus.</title>
        <authorList>
            <person name="Deckert G."/>
            <person name="Warren P.V."/>
            <person name="Gaasterland T."/>
            <person name="Young W.G."/>
            <person name="Lenox A.L."/>
            <person name="Graham D.E."/>
            <person name="Overbeek R."/>
            <person name="Snead M.A."/>
            <person name="Keller M."/>
            <person name="Aujay M."/>
            <person name="Huber R."/>
            <person name="Feldman R.A."/>
            <person name="Short J.M."/>
            <person name="Olsen G.J."/>
            <person name="Swanson R.V."/>
        </authorList>
    </citation>
    <scope>NUCLEOTIDE SEQUENCE [LARGE SCALE GENOMIC DNA]</scope>
    <source>
        <strain>VF5</strain>
    </source>
</reference>
<accession>O67216</accession>
<protein>
    <recommendedName>
        <fullName evidence="1">4-hydroxy-tetrahydrodipicolinate synthase</fullName>
        <shortName evidence="1">HTPA synthase</shortName>
        <ecNumber evidence="1">4.3.3.7</ecNumber>
    </recommendedName>
</protein>
<dbReference type="EC" id="4.3.3.7" evidence="1"/>
<dbReference type="EMBL" id="AE000657">
    <property type="protein sequence ID" value="AAC07169.1"/>
    <property type="molecule type" value="Genomic_DNA"/>
</dbReference>
<dbReference type="PIR" id="E70398">
    <property type="entry name" value="E70398"/>
</dbReference>
<dbReference type="RefSeq" id="NP_213780.1">
    <property type="nucleotide sequence ID" value="NC_000918.1"/>
</dbReference>
<dbReference type="RefSeq" id="WP_010880718.1">
    <property type="nucleotide sequence ID" value="NC_000918.1"/>
</dbReference>
<dbReference type="PDB" id="2EHH">
    <property type="method" value="X-ray"/>
    <property type="resolution" value="1.90 A"/>
    <property type="chains" value="A/C/D/E=1-294"/>
</dbReference>
<dbReference type="PDBsum" id="2EHH"/>
<dbReference type="SMR" id="O67216"/>
<dbReference type="FunCoup" id="O67216">
    <property type="interactions" value="434"/>
</dbReference>
<dbReference type="STRING" id="224324.aq_1143"/>
<dbReference type="EnsemblBacteria" id="AAC07169">
    <property type="protein sequence ID" value="AAC07169"/>
    <property type="gene ID" value="aq_1143"/>
</dbReference>
<dbReference type="KEGG" id="aae:aq_1143"/>
<dbReference type="PATRIC" id="fig|224324.8.peg.891"/>
<dbReference type="eggNOG" id="COG0329">
    <property type="taxonomic scope" value="Bacteria"/>
</dbReference>
<dbReference type="HOGENOM" id="CLU_049343_7_1_0"/>
<dbReference type="InParanoid" id="O67216"/>
<dbReference type="OrthoDB" id="9782828at2"/>
<dbReference type="BRENDA" id="4.3.3.7">
    <property type="organism ID" value="396"/>
</dbReference>
<dbReference type="UniPathway" id="UPA00034">
    <property type="reaction ID" value="UER00017"/>
</dbReference>
<dbReference type="EvolutionaryTrace" id="O67216"/>
<dbReference type="Proteomes" id="UP000000798">
    <property type="component" value="Chromosome"/>
</dbReference>
<dbReference type="GO" id="GO:0005829">
    <property type="term" value="C:cytosol"/>
    <property type="evidence" value="ECO:0000318"/>
    <property type="project" value="GO_Central"/>
</dbReference>
<dbReference type="GO" id="GO:0008840">
    <property type="term" value="F:4-hydroxy-tetrahydrodipicolinate synthase activity"/>
    <property type="evidence" value="ECO:0000318"/>
    <property type="project" value="GO_Central"/>
</dbReference>
<dbReference type="GO" id="GO:0019877">
    <property type="term" value="P:diaminopimelate biosynthetic process"/>
    <property type="evidence" value="ECO:0007669"/>
    <property type="project" value="UniProtKB-UniRule"/>
</dbReference>
<dbReference type="GO" id="GO:0009089">
    <property type="term" value="P:lysine biosynthetic process via diaminopimelate"/>
    <property type="evidence" value="ECO:0007669"/>
    <property type="project" value="UniProtKB-UniRule"/>
</dbReference>
<dbReference type="CDD" id="cd00950">
    <property type="entry name" value="DHDPS"/>
    <property type="match status" value="1"/>
</dbReference>
<dbReference type="Gene3D" id="3.20.20.70">
    <property type="entry name" value="Aldolase class I"/>
    <property type="match status" value="1"/>
</dbReference>
<dbReference type="HAMAP" id="MF_00418">
    <property type="entry name" value="DapA"/>
    <property type="match status" value="1"/>
</dbReference>
<dbReference type="InterPro" id="IPR013785">
    <property type="entry name" value="Aldolase_TIM"/>
</dbReference>
<dbReference type="InterPro" id="IPR005263">
    <property type="entry name" value="DapA"/>
</dbReference>
<dbReference type="InterPro" id="IPR002220">
    <property type="entry name" value="DapA-like"/>
</dbReference>
<dbReference type="InterPro" id="IPR020625">
    <property type="entry name" value="Schiff_base-form_aldolases_AS"/>
</dbReference>
<dbReference type="InterPro" id="IPR020624">
    <property type="entry name" value="Schiff_base-form_aldolases_CS"/>
</dbReference>
<dbReference type="NCBIfam" id="TIGR00674">
    <property type="entry name" value="dapA"/>
    <property type="match status" value="1"/>
</dbReference>
<dbReference type="PANTHER" id="PTHR12128:SF66">
    <property type="entry name" value="4-HYDROXY-2-OXOGLUTARATE ALDOLASE, MITOCHONDRIAL"/>
    <property type="match status" value="1"/>
</dbReference>
<dbReference type="PANTHER" id="PTHR12128">
    <property type="entry name" value="DIHYDRODIPICOLINATE SYNTHASE"/>
    <property type="match status" value="1"/>
</dbReference>
<dbReference type="Pfam" id="PF00701">
    <property type="entry name" value="DHDPS"/>
    <property type="match status" value="1"/>
</dbReference>
<dbReference type="PIRSF" id="PIRSF001365">
    <property type="entry name" value="DHDPS"/>
    <property type="match status" value="1"/>
</dbReference>
<dbReference type="PRINTS" id="PR00146">
    <property type="entry name" value="DHPICSNTHASE"/>
</dbReference>
<dbReference type="SMART" id="SM01130">
    <property type="entry name" value="DHDPS"/>
    <property type="match status" value="1"/>
</dbReference>
<dbReference type="SUPFAM" id="SSF51569">
    <property type="entry name" value="Aldolase"/>
    <property type="match status" value="1"/>
</dbReference>
<dbReference type="PROSITE" id="PS00665">
    <property type="entry name" value="DHDPS_1"/>
    <property type="match status" value="1"/>
</dbReference>
<dbReference type="PROSITE" id="PS00666">
    <property type="entry name" value="DHDPS_2"/>
    <property type="match status" value="1"/>
</dbReference>
<sequence length="294" mass="32670">MFQGSIVALITPFKEGEVDYEALGNLIEFHVDNGTDAILVCGTTGESPTLTFEEHEKVIEFAVKRAAGRIKVIAGTGGNATHEAVHLTAHAKEVGADGALVVVPYYNKPTQRGLYEHFKTVAQEVDIPIIIYNIPSRTCVEISVDTMFKLASECENIVASKESTPNMDRISEIVKRLGESFSVLSGDDSLTLPMMALGAKGVISVANNVMPREVKELIRAALEGDFRRAREIHYYLHDLFKVLFIETNPIPVKTACWMLGMCEKEFRLPLTEMSPENENKLREVLKKYNLPLKN</sequence>
<feature type="chain" id="PRO_0000103081" description="4-hydroxy-tetrahydrodipicolinate synthase">
    <location>
        <begin position="1"/>
        <end position="294"/>
    </location>
</feature>
<feature type="active site" description="Proton donor/acceptor" evidence="1">
    <location>
        <position position="132"/>
    </location>
</feature>
<feature type="active site" description="Schiff-base intermediate with substrate" evidence="1">
    <location>
        <position position="161"/>
    </location>
</feature>
<feature type="binding site" evidence="1">
    <location>
        <position position="44"/>
    </location>
    <ligand>
        <name>pyruvate</name>
        <dbReference type="ChEBI" id="CHEBI:15361"/>
    </ligand>
</feature>
<feature type="binding site" evidence="1">
    <location>
        <position position="203"/>
    </location>
    <ligand>
        <name>pyruvate</name>
        <dbReference type="ChEBI" id="CHEBI:15361"/>
    </ligand>
</feature>
<feature type="site" description="Part of a proton relay during catalysis" evidence="1">
    <location>
        <position position="43"/>
    </location>
</feature>
<feature type="site" description="Part of a proton relay during catalysis" evidence="1">
    <location>
        <position position="106"/>
    </location>
</feature>
<feature type="strand" evidence="3">
    <location>
        <begin position="4"/>
        <end position="8"/>
    </location>
</feature>
<feature type="helix" evidence="3">
    <location>
        <begin position="20"/>
        <end position="31"/>
    </location>
</feature>
<feature type="turn" evidence="3">
    <location>
        <begin position="32"/>
        <end position="34"/>
    </location>
</feature>
<feature type="strand" evidence="3">
    <location>
        <begin position="37"/>
        <end position="42"/>
    </location>
</feature>
<feature type="turn" evidence="3">
    <location>
        <begin position="43"/>
        <end position="46"/>
    </location>
</feature>
<feature type="helix" evidence="3">
    <location>
        <begin position="47"/>
        <end position="49"/>
    </location>
</feature>
<feature type="helix" evidence="3">
    <location>
        <begin position="52"/>
        <end position="66"/>
    </location>
</feature>
<feature type="strand" evidence="3">
    <location>
        <begin position="69"/>
        <end position="75"/>
    </location>
</feature>
<feature type="helix" evidence="3">
    <location>
        <begin position="81"/>
        <end position="93"/>
    </location>
</feature>
<feature type="strand" evidence="3">
    <location>
        <begin position="97"/>
        <end position="102"/>
    </location>
</feature>
<feature type="helix" evidence="3">
    <location>
        <begin position="111"/>
        <end position="124"/>
    </location>
</feature>
<feature type="strand" evidence="3">
    <location>
        <begin position="129"/>
        <end position="133"/>
    </location>
</feature>
<feature type="helix" evidence="3">
    <location>
        <begin position="135"/>
        <end position="138"/>
    </location>
</feature>
<feature type="helix" evidence="3">
    <location>
        <begin position="144"/>
        <end position="153"/>
    </location>
</feature>
<feature type="strand" evidence="3">
    <location>
        <begin position="157"/>
        <end position="162"/>
    </location>
</feature>
<feature type="helix" evidence="3">
    <location>
        <begin position="167"/>
        <end position="177"/>
    </location>
</feature>
<feature type="strand" evidence="3">
    <location>
        <begin position="181"/>
        <end position="187"/>
    </location>
</feature>
<feature type="helix" evidence="3">
    <location>
        <begin position="188"/>
        <end position="190"/>
    </location>
</feature>
<feature type="helix" evidence="3">
    <location>
        <begin position="191"/>
        <end position="196"/>
    </location>
</feature>
<feature type="strand" evidence="3">
    <location>
        <begin position="201"/>
        <end position="205"/>
    </location>
</feature>
<feature type="helix" evidence="3">
    <location>
        <begin position="206"/>
        <end position="208"/>
    </location>
</feature>
<feature type="helix" evidence="3">
    <location>
        <begin position="211"/>
        <end position="223"/>
    </location>
</feature>
<feature type="helix" evidence="3">
    <location>
        <begin position="226"/>
        <end position="242"/>
    </location>
</feature>
<feature type="strand" evidence="3">
    <location>
        <begin position="245"/>
        <end position="247"/>
    </location>
</feature>
<feature type="helix" evidence="3">
    <location>
        <begin position="250"/>
        <end position="258"/>
    </location>
</feature>
<feature type="helix" evidence="3">
    <location>
        <begin position="275"/>
        <end position="287"/>
    </location>
</feature>
<gene>
    <name evidence="1" type="primary">dapA</name>
    <name type="ordered locus">aq_1143</name>
</gene>
<keyword id="KW-0002">3D-structure</keyword>
<keyword id="KW-0028">Amino-acid biosynthesis</keyword>
<keyword id="KW-0963">Cytoplasm</keyword>
<keyword id="KW-0220">Diaminopimelate biosynthesis</keyword>
<keyword id="KW-0456">Lyase</keyword>
<keyword id="KW-0457">Lysine biosynthesis</keyword>
<keyword id="KW-1185">Reference proteome</keyword>
<keyword id="KW-0704">Schiff base</keyword>
<evidence type="ECO:0000255" key="1">
    <source>
        <dbReference type="HAMAP-Rule" id="MF_00418"/>
    </source>
</evidence>
<evidence type="ECO:0000305" key="2"/>
<evidence type="ECO:0007829" key="3">
    <source>
        <dbReference type="PDB" id="2EHH"/>
    </source>
</evidence>
<comment type="function">
    <text evidence="1">Catalyzes the condensation of (S)-aspartate-beta-semialdehyde [(S)-ASA] and pyruvate to 4-hydroxy-tetrahydrodipicolinate (HTPA).</text>
</comment>
<comment type="catalytic activity">
    <reaction evidence="1">
        <text>L-aspartate 4-semialdehyde + pyruvate = (2S,4S)-4-hydroxy-2,3,4,5-tetrahydrodipicolinate + H2O + H(+)</text>
        <dbReference type="Rhea" id="RHEA:34171"/>
        <dbReference type="ChEBI" id="CHEBI:15361"/>
        <dbReference type="ChEBI" id="CHEBI:15377"/>
        <dbReference type="ChEBI" id="CHEBI:15378"/>
        <dbReference type="ChEBI" id="CHEBI:67139"/>
        <dbReference type="ChEBI" id="CHEBI:537519"/>
        <dbReference type="EC" id="4.3.3.7"/>
    </reaction>
</comment>
<comment type="pathway">
    <text evidence="1">Amino-acid biosynthesis; L-lysine biosynthesis via DAP pathway; (S)-tetrahydrodipicolinate from L-aspartate: step 3/4.</text>
</comment>
<comment type="subunit">
    <text evidence="1">Homotetramer; dimer of dimers.</text>
</comment>
<comment type="subcellular location">
    <subcellularLocation>
        <location evidence="1">Cytoplasm</location>
    </subcellularLocation>
</comment>
<comment type="similarity">
    <text evidence="1">Belongs to the DapA family.</text>
</comment>
<comment type="caution">
    <text evidence="2">Was originally thought to be a dihydrodipicolinate synthase (DHDPS), catalyzing the condensation of (S)-aspartate-beta-semialdehyde [(S)-ASA] and pyruvate to dihydrodipicolinate (DHDP). However, it was shown in E.coli that the product of the enzymatic reaction is not dihydrodipicolinate but in fact (4S)-4-hydroxy-2,3,4,5-tetrahydro-(2S)-dipicolinic acid (HTPA), and that the consecutive dehydration reaction leading to DHDP is not spontaneous but catalyzed by DapB.</text>
</comment>
<organism>
    <name type="scientific">Aquifex aeolicus (strain VF5)</name>
    <dbReference type="NCBI Taxonomy" id="224324"/>
    <lineage>
        <taxon>Bacteria</taxon>
        <taxon>Pseudomonadati</taxon>
        <taxon>Aquificota</taxon>
        <taxon>Aquificia</taxon>
        <taxon>Aquificales</taxon>
        <taxon>Aquificaceae</taxon>
        <taxon>Aquifex</taxon>
    </lineage>
</organism>